<name>CHEB2_PHOPR</name>
<sequence>MTVKVLVVDDSSFFRRRVSEIINADPRLEVIGNAVNGKEAVELVKKLQPDVITMDIEMPVMDGITAVREIMKVLPTPILMFSSLTQEGAKATLDALDAGALDFLPKKFEDIARNRDEAISLLQKRVGELARKRMFMRRPLRTTPAVAPASRYSAPVNAALTREAALTTAARTTAARVTPTSTTRQTMHSAVAAKPMARFKASGKKYQLMAIGTSTGGPVALQKILTQLPANFPYPIVLVQHMPATFTAAFAARLNNLSKISVKEAEDGDTLRAGVAYLAPGGKQMMLEGRPGSARLRILDGGDRMNYKPCVDVTFGSAAKVYNDKVLSMILTGMGADGREGARMLKTHGSTVWAQDEESCVVYGMPQAVAKAGISTEDLPLERFAERILVEVGR</sequence>
<evidence type="ECO:0000255" key="1">
    <source>
        <dbReference type="HAMAP-Rule" id="MF_00099"/>
    </source>
</evidence>
<feature type="chain" id="PRO_0000225467" description="Protein-glutamate methylesterase/protein-glutamine glutaminase 2">
    <location>
        <begin position="1"/>
        <end position="394"/>
    </location>
</feature>
<feature type="domain" description="Response regulatory" evidence="1">
    <location>
        <begin position="4"/>
        <end position="121"/>
    </location>
</feature>
<feature type="domain" description="CheB-type methylesterase" evidence="1">
    <location>
        <begin position="202"/>
        <end position="394"/>
    </location>
</feature>
<feature type="active site" evidence="1">
    <location>
        <position position="214"/>
    </location>
</feature>
<feature type="active site" evidence="1">
    <location>
        <position position="241"/>
    </location>
</feature>
<feature type="active site" evidence="1">
    <location>
        <position position="337"/>
    </location>
</feature>
<feature type="modified residue" description="4-aspartylphosphate" evidence="1">
    <location>
        <position position="55"/>
    </location>
</feature>
<dbReference type="EC" id="3.1.1.61" evidence="1"/>
<dbReference type="EC" id="3.5.1.44" evidence="1"/>
<dbReference type="EMBL" id="CR378666">
    <property type="protein sequence ID" value="CAG19354.1"/>
    <property type="molecule type" value="Genomic_DNA"/>
</dbReference>
<dbReference type="RefSeq" id="WP_011217689.1">
    <property type="nucleotide sequence ID" value="NC_006370.1"/>
</dbReference>
<dbReference type="SMR" id="Q6LTM2"/>
<dbReference type="STRING" id="298386.PBPRA0943"/>
<dbReference type="KEGG" id="ppr:PBPRA0943"/>
<dbReference type="eggNOG" id="COG2201">
    <property type="taxonomic scope" value="Bacteria"/>
</dbReference>
<dbReference type="HOGENOM" id="CLU_000445_51_0_6"/>
<dbReference type="Proteomes" id="UP000000593">
    <property type="component" value="Chromosome 1"/>
</dbReference>
<dbReference type="GO" id="GO:0005737">
    <property type="term" value="C:cytoplasm"/>
    <property type="evidence" value="ECO:0007669"/>
    <property type="project" value="UniProtKB-SubCell"/>
</dbReference>
<dbReference type="GO" id="GO:0000156">
    <property type="term" value="F:phosphorelay response regulator activity"/>
    <property type="evidence" value="ECO:0007669"/>
    <property type="project" value="InterPro"/>
</dbReference>
<dbReference type="GO" id="GO:0008984">
    <property type="term" value="F:protein-glutamate methylesterase activity"/>
    <property type="evidence" value="ECO:0007669"/>
    <property type="project" value="UniProtKB-UniRule"/>
</dbReference>
<dbReference type="GO" id="GO:0050568">
    <property type="term" value="F:protein-glutamine glutaminase activity"/>
    <property type="evidence" value="ECO:0007669"/>
    <property type="project" value="UniProtKB-UniRule"/>
</dbReference>
<dbReference type="GO" id="GO:0006935">
    <property type="term" value="P:chemotaxis"/>
    <property type="evidence" value="ECO:0007669"/>
    <property type="project" value="UniProtKB-UniRule"/>
</dbReference>
<dbReference type="CDD" id="cd16432">
    <property type="entry name" value="CheB_Rec"/>
    <property type="match status" value="1"/>
</dbReference>
<dbReference type="CDD" id="cd17541">
    <property type="entry name" value="REC_CheB-like"/>
    <property type="match status" value="1"/>
</dbReference>
<dbReference type="FunFam" id="3.40.50.2300:FF:000077">
    <property type="entry name" value="Chemotaxis response regulator"/>
    <property type="match status" value="1"/>
</dbReference>
<dbReference type="FunFam" id="3.40.50.180:FF:000001">
    <property type="entry name" value="Protein-glutamate methylesterase/protein-glutamine glutaminase"/>
    <property type="match status" value="1"/>
</dbReference>
<dbReference type="Gene3D" id="3.40.50.2300">
    <property type="match status" value="1"/>
</dbReference>
<dbReference type="Gene3D" id="3.40.50.180">
    <property type="entry name" value="Methylesterase CheB, C-terminal domain"/>
    <property type="match status" value="1"/>
</dbReference>
<dbReference type="HAMAP" id="MF_00099">
    <property type="entry name" value="CheB_chemtxs"/>
    <property type="match status" value="1"/>
</dbReference>
<dbReference type="InterPro" id="IPR008248">
    <property type="entry name" value="CheB-like"/>
</dbReference>
<dbReference type="InterPro" id="IPR035909">
    <property type="entry name" value="CheB_C"/>
</dbReference>
<dbReference type="InterPro" id="IPR011006">
    <property type="entry name" value="CheY-like_superfamily"/>
</dbReference>
<dbReference type="InterPro" id="IPR000673">
    <property type="entry name" value="Sig_transdc_resp-reg_Me-estase"/>
</dbReference>
<dbReference type="InterPro" id="IPR001789">
    <property type="entry name" value="Sig_transdc_resp-reg_receiver"/>
</dbReference>
<dbReference type="NCBIfam" id="NF001965">
    <property type="entry name" value="PRK00742.1"/>
    <property type="match status" value="1"/>
</dbReference>
<dbReference type="PANTHER" id="PTHR42872">
    <property type="entry name" value="PROTEIN-GLUTAMATE METHYLESTERASE/PROTEIN-GLUTAMINE GLUTAMINASE"/>
    <property type="match status" value="1"/>
</dbReference>
<dbReference type="PANTHER" id="PTHR42872:SF3">
    <property type="entry name" value="PROTEIN-GLUTAMATE METHYLESTERASE_PROTEIN-GLUTAMINE GLUTAMINASE 1"/>
    <property type="match status" value="1"/>
</dbReference>
<dbReference type="Pfam" id="PF01339">
    <property type="entry name" value="CheB_methylest"/>
    <property type="match status" value="1"/>
</dbReference>
<dbReference type="Pfam" id="PF00072">
    <property type="entry name" value="Response_reg"/>
    <property type="match status" value="1"/>
</dbReference>
<dbReference type="PIRSF" id="PIRSF000876">
    <property type="entry name" value="RR_chemtxs_CheB"/>
    <property type="match status" value="1"/>
</dbReference>
<dbReference type="SMART" id="SM00448">
    <property type="entry name" value="REC"/>
    <property type="match status" value="1"/>
</dbReference>
<dbReference type="SUPFAM" id="SSF52172">
    <property type="entry name" value="CheY-like"/>
    <property type="match status" value="1"/>
</dbReference>
<dbReference type="SUPFAM" id="SSF52738">
    <property type="entry name" value="Methylesterase CheB, C-terminal domain"/>
    <property type="match status" value="1"/>
</dbReference>
<dbReference type="PROSITE" id="PS50122">
    <property type="entry name" value="CHEB"/>
    <property type="match status" value="1"/>
</dbReference>
<dbReference type="PROSITE" id="PS50110">
    <property type="entry name" value="RESPONSE_REGULATORY"/>
    <property type="match status" value="1"/>
</dbReference>
<gene>
    <name evidence="1" type="primary">cheB2</name>
    <name type="ordered locus">PBPRA0943</name>
</gene>
<proteinExistence type="inferred from homology"/>
<organism>
    <name type="scientific">Photobacterium profundum (strain SS9)</name>
    <dbReference type="NCBI Taxonomy" id="298386"/>
    <lineage>
        <taxon>Bacteria</taxon>
        <taxon>Pseudomonadati</taxon>
        <taxon>Pseudomonadota</taxon>
        <taxon>Gammaproteobacteria</taxon>
        <taxon>Vibrionales</taxon>
        <taxon>Vibrionaceae</taxon>
        <taxon>Photobacterium</taxon>
    </lineage>
</organism>
<keyword id="KW-0145">Chemotaxis</keyword>
<keyword id="KW-0963">Cytoplasm</keyword>
<keyword id="KW-0378">Hydrolase</keyword>
<keyword id="KW-0597">Phosphoprotein</keyword>
<keyword id="KW-1185">Reference proteome</keyword>
<accession>Q6LTM2</accession>
<comment type="function">
    <text evidence="1">Involved in chemotaxis. Part of a chemotaxis signal transduction system that modulates chemotaxis in response to various stimuli. Catalyzes the demethylation of specific methylglutamate residues introduced into the chemoreceptors (methyl-accepting chemotaxis proteins or MCP) by CheR. Also mediates the irreversible deamidation of specific glutamine residues to glutamic acid.</text>
</comment>
<comment type="catalytic activity">
    <reaction evidence="1">
        <text>[protein]-L-glutamate 5-O-methyl ester + H2O = L-glutamyl-[protein] + methanol + H(+)</text>
        <dbReference type="Rhea" id="RHEA:23236"/>
        <dbReference type="Rhea" id="RHEA-COMP:10208"/>
        <dbReference type="Rhea" id="RHEA-COMP:10311"/>
        <dbReference type="ChEBI" id="CHEBI:15377"/>
        <dbReference type="ChEBI" id="CHEBI:15378"/>
        <dbReference type="ChEBI" id="CHEBI:17790"/>
        <dbReference type="ChEBI" id="CHEBI:29973"/>
        <dbReference type="ChEBI" id="CHEBI:82795"/>
        <dbReference type="EC" id="3.1.1.61"/>
    </reaction>
</comment>
<comment type="catalytic activity">
    <reaction evidence="1">
        <text>L-glutaminyl-[protein] + H2O = L-glutamyl-[protein] + NH4(+)</text>
        <dbReference type="Rhea" id="RHEA:16441"/>
        <dbReference type="Rhea" id="RHEA-COMP:10207"/>
        <dbReference type="Rhea" id="RHEA-COMP:10208"/>
        <dbReference type="ChEBI" id="CHEBI:15377"/>
        <dbReference type="ChEBI" id="CHEBI:28938"/>
        <dbReference type="ChEBI" id="CHEBI:29973"/>
        <dbReference type="ChEBI" id="CHEBI:30011"/>
        <dbReference type="EC" id="3.5.1.44"/>
    </reaction>
</comment>
<comment type="subcellular location">
    <subcellularLocation>
        <location evidence="1">Cytoplasm</location>
    </subcellularLocation>
</comment>
<comment type="domain">
    <text evidence="1">Contains a C-terminal catalytic domain, and an N-terminal region which modulates catalytic activity.</text>
</comment>
<comment type="PTM">
    <text evidence="1">Phosphorylated by CheA. Phosphorylation of the N-terminal regulatory domain activates the methylesterase activity.</text>
</comment>
<comment type="similarity">
    <text evidence="1">Belongs to the CheB family.</text>
</comment>
<reference key="1">
    <citation type="journal article" date="2005" name="Science">
        <title>Life at depth: Photobacterium profundum genome sequence and expression analysis.</title>
        <authorList>
            <person name="Vezzi A."/>
            <person name="Campanaro S."/>
            <person name="D'Angelo M."/>
            <person name="Simonato F."/>
            <person name="Vitulo N."/>
            <person name="Lauro F.M."/>
            <person name="Cestaro A."/>
            <person name="Malacrida G."/>
            <person name="Simionati B."/>
            <person name="Cannata N."/>
            <person name="Romualdi C."/>
            <person name="Bartlett D.H."/>
            <person name="Valle G."/>
        </authorList>
    </citation>
    <scope>NUCLEOTIDE SEQUENCE [LARGE SCALE GENOMIC DNA]</scope>
    <source>
        <strain>ATCC BAA-1253 / SS9</strain>
    </source>
</reference>
<protein>
    <recommendedName>
        <fullName evidence="1">Protein-glutamate methylesterase/protein-glutamine glutaminase 2</fullName>
        <ecNumber evidence="1">3.1.1.61</ecNumber>
        <ecNumber evidence="1">3.5.1.44</ecNumber>
    </recommendedName>
</protein>